<evidence type="ECO:0000255" key="1">
    <source>
        <dbReference type="HAMAP-Rule" id="MF_00139"/>
    </source>
</evidence>
<evidence type="ECO:0000255" key="2">
    <source>
        <dbReference type="PROSITE-ProRule" id="PRU01202"/>
    </source>
</evidence>
<dbReference type="EC" id="2.1.2.3" evidence="1"/>
<dbReference type="EC" id="3.5.4.10" evidence="1"/>
<dbReference type="EMBL" id="AE016822">
    <property type="protein sequence ID" value="AAT89682.1"/>
    <property type="molecule type" value="Genomic_DNA"/>
</dbReference>
<dbReference type="RefSeq" id="WP_011186668.1">
    <property type="nucleotide sequence ID" value="NC_006087.1"/>
</dbReference>
<dbReference type="SMR" id="Q6AD62"/>
<dbReference type="STRING" id="281090.Lxx19650"/>
<dbReference type="KEGG" id="lxx:Lxx19650"/>
<dbReference type="eggNOG" id="COG0138">
    <property type="taxonomic scope" value="Bacteria"/>
</dbReference>
<dbReference type="HOGENOM" id="CLU_016316_5_2_11"/>
<dbReference type="UniPathway" id="UPA00074">
    <property type="reaction ID" value="UER00133"/>
</dbReference>
<dbReference type="UniPathway" id="UPA00074">
    <property type="reaction ID" value="UER00135"/>
</dbReference>
<dbReference type="Proteomes" id="UP000001306">
    <property type="component" value="Chromosome"/>
</dbReference>
<dbReference type="GO" id="GO:0005829">
    <property type="term" value="C:cytosol"/>
    <property type="evidence" value="ECO:0007669"/>
    <property type="project" value="TreeGrafter"/>
</dbReference>
<dbReference type="GO" id="GO:0003937">
    <property type="term" value="F:IMP cyclohydrolase activity"/>
    <property type="evidence" value="ECO:0007669"/>
    <property type="project" value="UniProtKB-UniRule"/>
</dbReference>
<dbReference type="GO" id="GO:0004643">
    <property type="term" value="F:phosphoribosylaminoimidazolecarboxamide formyltransferase activity"/>
    <property type="evidence" value="ECO:0007669"/>
    <property type="project" value="UniProtKB-UniRule"/>
</dbReference>
<dbReference type="GO" id="GO:0006189">
    <property type="term" value="P:'de novo' IMP biosynthetic process"/>
    <property type="evidence" value="ECO:0007669"/>
    <property type="project" value="UniProtKB-UniRule"/>
</dbReference>
<dbReference type="CDD" id="cd01421">
    <property type="entry name" value="IMPCH"/>
    <property type="match status" value="1"/>
</dbReference>
<dbReference type="FunFam" id="3.40.140.20:FF:000001">
    <property type="entry name" value="Bifunctional purine biosynthesis protein PurH"/>
    <property type="match status" value="1"/>
</dbReference>
<dbReference type="FunFam" id="3.40.50.1380:FF:000001">
    <property type="entry name" value="Bifunctional purine biosynthesis protein PurH"/>
    <property type="match status" value="1"/>
</dbReference>
<dbReference type="Gene3D" id="3.40.140.20">
    <property type="match status" value="2"/>
</dbReference>
<dbReference type="Gene3D" id="3.40.50.1380">
    <property type="entry name" value="Methylglyoxal synthase-like domain"/>
    <property type="match status" value="1"/>
</dbReference>
<dbReference type="HAMAP" id="MF_00139">
    <property type="entry name" value="PurH"/>
    <property type="match status" value="1"/>
</dbReference>
<dbReference type="InterPro" id="IPR024051">
    <property type="entry name" value="AICAR_Tfase_dup_dom_sf"/>
</dbReference>
<dbReference type="InterPro" id="IPR016193">
    <property type="entry name" value="Cytidine_deaminase-like"/>
</dbReference>
<dbReference type="InterPro" id="IPR011607">
    <property type="entry name" value="MGS-like_dom"/>
</dbReference>
<dbReference type="InterPro" id="IPR036914">
    <property type="entry name" value="MGS-like_dom_sf"/>
</dbReference>
<dbReference type="InterPro" id="IPR002695">
    <property type="entry name" value="PurH-like"/>
</dbReference>
<dbReference type="NCBIfam" id="NF002049">
    <property type="entry name" value="PRK00881.1"/>
    <property type="match status" value="1"/>
</dbReference>
<dbReference type="NCBIfam" id="TIGR00355">
    <property type="entry name" value="purH"/>
    <property type="match status" value="1"/>
</dbReference>
<dbReference type="PANTHER" id="PTHR11692:SF0">
    <property type="entry name" value="BIFUNCTIONAL PURINE BIOSYNTHESIS PROTEIN ATIC"/>
    <property type="match status" value="1"/>
</dbReference>
<dbReference type="PANTHER" id="PTHR11692">
    <property type="entry name" value="BIFUNCTIONAL PURINE BIOSYNTHESIS PROTEIN PURH"/>
    <property type="match status" value="1"/>
</dbReference>
<dbReference type="Pfam" id="PF01808">
    <property type="entry name" value="AICARFT_IMPCHas"/>
    <property type="match status" value="1"/>
</dbReference>
<dbReference type="Pfam" id="PF02142">
    <property type="entry name" value="MGS"/>
    <property type="match status" value="1"/>
</dbReference>
<dbReference type="PIRSF" id="PIRSF000414">
    <property type="entry name" value="AICARFT_IMPCHas"/>
    <property type="match status" value="1"/>
</dbReference>
<dbReference type="SMART" id="SM00798">
    <property type="entry name" value="AICARFT_IMPCHas"/>
    <property type="match status" value="1"/>
</dbReference>
<dbReference type="SMART" id="SM00851">
    <property type="entry name" value="MGS"/>
    <property type="match status" value="1"/>
</dbReference>
<dbReference type="SUPFAM" id="SSF53927">
    <property type="entry name" value="Cytidine deaminase-like"/>
    <property type="match status" value="1"/>
</dbReference>
<dbReference type="SUPFAM" id="SSF52335">
    <property type="entry name" value="Methylglyoxal synthase-like"/>
    <property type="match status" value="1"/>
</dbReference>
<dbReference type="PROSITE" id="PS51855">
    <property type="entry name" value="MGS"/>
    <property type="match status" value="1"/>
</dbReference>
<accession>Q6AD62</accession>
<name>PUR9_LEIXX</name>
<proteinExistence type="inferred from homology"/>
<gene>
    <name evidence="1" type="primary">purH</name>
    <name type="ordered locus">Lxx19650</name>
</gene>
<keyword id="KW-0378">Hydrolase</keyword>
<keyword id="KW-0511">Multifunctional enzyme</keyword>
<keyword id="KW-0658">Purine biosynthesis</keyword>
<keyword id="KW-1185">Reference proteome</keyword>
<keyword id="KW-0808">Transferase</keyword>
<feature type="chain" id="PRO_0000192098" description="Bifunctional purine biosynthesis protein PurH">
    <location>
        <begin position="1"/>
        <end position="526"/>
    </location>
</feature>
<feature type="domain" description="MGS-like" evidence="2">
    <location>
        <begin position="15"/>
        <end position="161"/>
    </location>
</feature>
<comment type="catalytic activity">
    <reaction evidence="1">
        <text>(6R)-10-formyltetrahydrofolate + 5-amino-1-(5-phospho-beta-D-ribosyl)imidazole-4-carboxamide = 5-formamido-1-(5-phospho-D-ribosyl)imidazole-4-carboxamide + (6S)-5,6,7,8-tetrahydrofolate</text>
        <dbReference type="Rhea" id="RHEA:22192"/>
        <dbReference type="ChEBI" id="CHEBI:57453"/>
        <dbReference type="ChEBI" id="CHEBI:58467"/>
        <dbReference type="ChEBI" id="CHEBI:58475"/>
        <dbReference type="ChEBI" id="CHEBI:195366"/>
        <dbReference type="EC" id="2.1.2.3"/>
    </reaction>
</comment>
<comment type="catalytic activity">
    <reaction evidence="1">
        <text>IMP + H2O = 5-formamido-1-(5-phospho-D-ribosyl)imidazole-4-carboxamide</text>
        <dbReference type="Rhea" id="RHEA:18445"/>
        <dbReference type="ChEBI" id="CHEBI:15377"/>
        <dbReference type="ChEBI" id="CHEBI:58053"/>
        <dbReference type="ChEBI" id="CHEBI:58467"/>
        <dbReference type="EC" id="3.5.4.10"/>
    </reaction>
</comment>
<comment type="pathway">
    <text evidence="1">Purine metabolism; IMP biosynthesis via de novo pathway; 5-formamido-1-(5-phospho-D-ribosyl)imidazole-4-carboxamide from 5-amino-1-(5-phospho-D-ribosyl)imidazole-4-carboxamide (10-formyl THF route): step 1/1.</text>
</comment>
<comment type="pathway">
    <text evidence="1">Purine metabolism; IMP biosynthesis via de novo pathway; IMP from 5-formamido-1-(5-phospho-D-ribosyl)imidazole-4-carboxamide: step 1/1.</text>
</comment>
<comment type="domain">
    <text evidence="1">The IMP cyclohydrolase activity resides in the N-terminal region.</text>
</comment>
<comment type="similarity">
    <text evidence="1">Belongs to the PurH family.</text>
</comment>
<organism>
    <name type="scientific">Leifsonia xyli subsp. xyli (strain CTCB07)</name>
    <dbReference type="NCBI Taxonomy" id="281090"/>
    <lineage>
        <taxon>Bacteria</taxon>
        <taxon>Bacillati</taxon>
        <taxon>Actinomycetota</taxon>
        <taxon>Actinomycetes</taxon>
        <taxon>Micrococcales</taxon>
        <taxon>Microbacteriaceae</taxon>
        <taxon>Leifsonia</taxon>
    </lineage>
</organism>
<sequence>MNGPRHDTSLFRERDVVPIRRALISVSDKTGLLDLAASLADAGVEIVSTGSTAQTIREAGHTVTDVASVTGFPESLDGRVKTLHPAIHSGLLADLRLASHEEQLKDLGIEPFELVVVNLYPFVETVASGAVDDDVVEQIDIGGPAMVRASAKNHANVAIVVSPADYAGLAAAVAAGGTTWGQRRELAARAFAHTAAYDGAVAAWFAGEAPDLSAVAERFEVRAEWGQPLRYGENAHQAAALYADPAGCGIAQASQHGGKEMSYNNYVDADAALRSAYDFAEPAVAIVKHANPCGIAVAGDIAEAHRKAHECDPVSAYGGVIAANRTVTLAMAETVRGIFTEVLIAPGYEPGALELLKTKKNLRILELPVGYARSLTEFRQISGGVLVQDTDRFDEFDSSGWTLVAGAEADAVTRADLEFTWKACRAVKSNAILLAKDGASVGVGMGQVNRVDSCTLAVSRAAERAVGAVAASDAFFPFADGPEILIAAGVAAIVQPGGSIRDEEVIASATAAGVTMYFTGERHFFH</sequence>
<reference key="1">
    <citation type="journal article" date="2004" name="Mol. Plant Microbe Interact.">
        <title>The genome sequence of the Gram-positive sugarcane pathogen Leifsonia xyli subsp. xyli.</title>
        <authorList>
            <person name="Monteiro-Vitorello C.B."/>
            <person name="Camargo L.E.A."/>
            <person name="Van Sluys M.A."/>
            <person name="Kitajima J.P."/>
            <person name="Truffi D."/>
            <person name="do Amaral A.M."/>
            <person name="Harakava R."/>
            <person name="de Oliveira J.C.F."/>
            <person name="Wood D."/>
            <person name="de Oliveira M.C."/>
            <person name="Miyaki C.Y."/>
            <person name="Takita M.A."/>
            <person name="da Silva A.C.R."/>
            <person name="Furlan L.R."/>
            <person name="Carraro D.M."/>
            <person name="Camarotte G."/>
            <person name="Almeida N.F. Jr."/>
            <person name="Carrer H."/>
            <person name="Coutinho L.L."/>
            <person name="El-Dorry H.A."/>
            <person name="Ferro M.I.T."/>
            <person name="Gagliardi P.R."/>
            <person name="Giglioti E."/>
            <person name="Goldman M.H.S."/>
            <person name="Goldman G.H."/>
            <person name="Kimura E.T."/>
            <person name="Ferro E.S."/>
            <person name="Kuramae E.E."/>
            <person name="Lemos E.G.M."/>
            <person name="Lemos M.V.F."/>
            <person name="Mauro S.M.Z."/>
            <person name="Machado M.A."/>
            <person name="Marino C.L."/>
            <person name="Menck C.F."/>
            <person name="Nunes L.R."/>
            <person name="Oliveira R.C."/>
            <person name="Pereira G.G."/>
            <person name="Siqueira W."/>
            <person name="de Souza A.A."/>
            <person name="Tsai S.M."/>
            <person name="Zanca A.S."/>
            <person name="Simpson A.J.G."/>
            <person name="Brumbley S.M."/>
            <person name="Setubal J.C."/>
        </authorList>
    </citation>
    <scope>NUCLEOTIDE SEQUENCE [LARGE SCALE GENOMIC DNA]</scope>
    <source>
        <strain>CTCB07</strain>
    </source>
</reference>
<protein>
    <recommendedName>
        <fullName evidence="1">Bifunctional purine biosynthesis protein PurH</fullName>
    </recommendedName>
    <domain>
        <recommendedName>
            <fullName evidence="1">Phosphoribosylaminoimidazolecarboxamide formyltransferase</fullName>
            <ecNumber evidence="1">2.1.2.3</ecNumber>
        </recommendedName>
        <alternativeName>
            <fullName evidence="1">AICAR transformylase</fullName>
        </alternativeName>
    </domain>
    <domain>
        <recommendedName>
            <fullName evidence="1">IMP cyclohydrolase</fullName>
            <ecNumber evidence="1">3.5.4.10</ecNumber>
        </recommendedName>
        <alternativeName>
            <fullName evidence="1">ATIC</fullName>
        </alternativeName>
        <alternativeName>
            <fullName evidence="1">IMP synthase</fullName>
        </alternativeName>
        <alternativeName>
            <fullName evidence="1">Inosinicase</fullName>
        </alternativeName>
    </domain>
</protein>